<comment type="function">
    <text evidence="2 5">Bridging factor that mediates the recruitment of CYLD to the LUBAC complex, thereby regulating TNF-alpha-induced necroptosis (By similarity). Acts as a direct binding intermediate that bridges RNF31/HOIP, the catalytic subunit of the LUBAC complex, and the deubiquitinase (CYLD), thereby recruiting CYLD to the TNF-R1 signaling complex (TNF-RSC) (By similarity). Required to activate the 'Met-1'- (linear) and 'Lys-63'-linked deubiquitinase activities of CYLD (PubMed:28701375). Controls the kinase activity of RIPK1 and TNF-alpha-induced necroptosis by promoting 'Met-1'-linked deubiquitination of RIPK1 by CYLD (PubMed:28701375).</text>
</comment>
<comment type="subunit">
    <text evidence="2">Interacts (via the PIM motif) with RNF31/HOIP (via the PUB domain); the interaction is direct. Interacts (via the PUB domain) with CYLD; the interaction is direct.</text>
</comment>
<comment type="subcellular location">
    <subcellularLocation>
        <location evidence="6">Cytoplasm</location>
    </subcellularLocation>
    <subcellularLocation>
        <location evidence="1">Nucleus</location>
    </subcellularLocation>
</comment>
<comment type="alternative products">
    <event type="alternative splicing"/>
    <isoform>
        <id>Q8K004-1</id>
        <name>1</name>
        <sequence type="displayed"/>
    </isoform>
    <isoform>
        <id>Q8K004-2</id>
        <name>2</name>
        <sequence type="described" ref="VSP_059905 VSP_059906"/>
    </isoform>
</comment>
<comment type="tissue specificity">
    <text evidence="5 6">Widely expressed, with highest expression in testis, lung and intestine, and lower expression in brain, heart and spleen (PubMed:28701375). Present at high level in Sertoli cells: expressed from stage I to stage XII of the testis seminiferous epithelium (at protein level) (PubMed:29025062).</text>
</comment>
<comment type="disruption phenotype">
    <text evidence="5 6">Mice are fertile and healthy with no obvious abnormalities in major organs in normal conditions (PubMed:28701375, PubMed:29025062). Males however display a decreased fertility: they show reduced testis size and sperm number (PubMed:29025062). The proliferation of germ cells in the seminiferous tubules is decreased in male gonads (PubMed:29025062). Impaired necroptosis: deficient cells show resistance to RIPK1-dependent apoptosis and necroptosis and are partially protected against RIPK1-independent apoptosis (PubMed:28701375).</text>
</comment>
<comment type="similarity">
    <text evidence="9">Belongs to the SPATA2 family.</text>
</comment>
<organism>
    <name type="scientific">Mus musculus</name>
    <name type="common">Mouse</name>
    <dbReference type="NCBI Taxonomy" id="10090"/>
    <lineage>
        <taxon>Eukaryota</taxon>
        <taxon>Metazoa</taxon>
        <taxon>Chordata</taxon>
        <taxon>Craniata</taxon>
        <taxon>Vertebrata</taxon>
        <taxon>Euteleostomi</taxon>
        <taxon>Mammalia</taxon>
        <taxon>Eutheria</taxon>
        <taxon>Euarchontoglires</taxon>
        <taxon>Glires</taxon>
        <taxon>Rodentia</taxon>
        <taxon>Myomorpha</taxon>
        <taxon>Muroidea</taxon>
        <taxon>Muridae</taxon>
        <taxon>Murinae</taxon>
        <taxon>Mus</taxon>
        <taxon>Mus</taxon>
    </lineage>
</organism>
<evidence type="ECO:0000250" key="1">
    <source>
        <dbReference type="UniProtKB" id="Q66HP6"/>
    </source>
</evidence>
<evidence type="ECO:0000250" key="2">
    <source>
        <dbReference type="UniProtKB" id="Q9UM82"/>
    </source>
</evidence>
<evidence type="ECO:0000255" key="3"/>
<evidence type="ECO:0000256" key="4">
    <source>
        <dbReference type="SAM" id="MobiDB-lite"/>
    </source>
</evidence>
<evidence type="ECO:0000269" key="5">
    <source>
    </source>
</evidence>
<evidence type="ECO:0000269" key="6">
    <source>
    </source>
</evidence>
<evidence type="ECO:0000303" key="7">
    <source>
    </source>
</evidence>
<evidence type="ECO:0000303" key="8">
    <source>
    </source>
</evidence>
<evidence type="ECO:0000305" key="9"/>
<evidence type="ECO:0000312" key="10">
    <source>
        <dbReference type="EMBL" id="AAH34597.1"/>
    </source>
</evidence>
<evidence type="ECO:0000312" key="11">
    <source>
        <dbReference type="MGI" id="MGI:2146885"/>
    </source>
</evidence>
<dbReference type="EMBL" id="AK051741">
    <property type="protein sequence ID" value="BAC34748.1"/>
    <property type="molecule type" value="mRNA"/>
</dbReference>
<dbReference type="EMBL" id="AK144826">
    <property type="protein sequence ID" value="BAE26086.1"/>
    <property type="molecule type" value="mRNA"/>
</dbReference>
<dbReference type="EMBL" id="AK156188">
    <property type="protein sequence ID" value="BAE33617.1"/>
    <property type="molecule type" value="mRNA"/>
</dbReference>
<dbReference type="EMBL" id="AK162743">
    <property type="protein sequence ID" value="BAE37046.1"/>
    <property type="molecule type" value="mRNA"/>
</dbReference>
<dbReference type="EMBL" id="AK170356">
    <property type="protein sequence ID" value="BAE41742.1"/>
    <property type="molecule type" value="mRNA"/>
</dbReference>
<dbReference type="EMBL" id="AK171664">
    <property type="protein sequence ID" value="BAE42596.1"/>
    <property type="molecule type" value="mRNA"/>
</dbReference>
<dbReference type="EMBL" id="AK171852">
    <property type="protein sequence ID" value="BAE42698.1"/>
    <property type="molecule type" value="mRNA"/>
</dbReference>
<dbReference type="EMBL" id="AL589870">
    <property type="status" value="NOT_ANNOTATED_CDS"/>
    <property type="molecule type" value="Genomic_DNA"/>
</dbReference>
<dbReference type="EMBL" id="BC034597">
    <property type="protein sequence ID" value="AAH34597.1"/>
    <property type="molecule type" value="mRNA"/>
</dbReference>
<dbReference type="CCDS" id="CCDS17100.1">
    <molecule id="Q8K004-1"/>
</dbReference>
<dbReference type="CCDS" id="CCDS89587.1">
    <molecule id="Q8K004-2"/>
</dbReference>
<dbReference type="RefSeq" id="NP_001343452.1">
    <molecule id="Q8K004-2"/>
    <property type="nucleotide sequence ID" value="NM_001356523.2"/>
</dbReference>
<dbReference type="RefSeq" id="NP_001398322.1">
    <molecule id="Q8K004-1"/>
    <property type="nucleotide sequence ID" value="NM_001411393.1"/>
</dbReference>
<dbReference type="RefSeq" id="NP_001398323.1">
    <molecule id="Q8K004-1"/>
    <property type="nucleotide sequence ID" value="NM_001411394.1"/>
</dbReference>
<dbReference type="RefSeq" id="NP_001398324.1">
    <molecule id="Q8K004-1"/>
    <property type="nucleotide sequence ID" value="NM_001411395.1"/>
</dbReference>
<dbReference type="RefSeq" id="NP_001398325.1">
    <molecule id="Q8K004-1"/>
    <property type="nucleotide sequence ID" value="NM_001411396.1"/>
</dbReference>
<dbReference type="RefSeq" id="NP_001398326.1">
    <molecule id="Q8K004-1"/>
    <property type="nucleotide sequence ID" value="NM_001411397.1"/>
</dbReference>
<dbReference type="RefSeq" id="NP_001398327.1">
    <molecule id="Q8K004-1"/>
    <property type="nucleotide sequence ID" value="NM_001411398.1"/>
</dbReference>
<dbReference type="RefSeq" id="NP_739562.1">
    <molecule id="Q8K004-1"/>
    <property type="nucleotide sequence ID" value="NM_170756.3"/>
</dbReference>
<dbReference type="RefSeq" id="XP_006499647.1">
    <property type="nucleotide sequence ID" value="XM_006499584.2"/>
</dbReference>
<dbReference type="RefSeq" id="XP_006499649.1">
    <property type="nucleotide sequence ID" value="XM_006499586.3"/>
</dbReference>
<dbReference type="RefSeq" id="XP_017174138.1">
    <property type="nucleotide sequence ID" value="XM_017318649.1"/>
</dbReference>
<dbReference type="RefSeq" id="XP_017174139.1">
    <molecule id="Q8K004-1"/>
    <property type="nucleotide sequence ID" value="XM_017318650.3"/>
</dbReference>
<dbReference type="RefSeq" id="XP_017174140.1">
    <property type="nucleotide sequence ID" value="XM_017318651.1"/>
</dbReference>
<dbReference type="SMR" id="Q8K004"/>
<dbReference type="FunCoup" id="Q8K004">
    <property type="interactions" value="2600"/>
</dbReference>
<dbReference type="STRING" id="10090.ENSMUSP00000057095"/>
<dbReference type="iPTMnet" id="Q8K004"/>
<dbReference type="PhosphoSitePlus" id="Q8K004"/>
<dbReference type="jPOST" id="Q8K004"/>
<dbReference type="PaxDb" id="10090-ENSMUSP00000057095"/>
<dbReference type="ProteomicsDB" id="334874">
    <molecule id="Q8K004-1"/>
</dbReference>
<dbReference type="ProteomicsDB" id="343391"/>
<dbReference type="Pumba" id="Q8K004"/>
<dbReference type="Antibodypedia" id="28514">
    <property type="antibodies" value="212 antibodies from 21 providers"/>
</dbReference>
<dbReference type="DNASU" id="263876"/>
<dbReference type="Ensembl" id="ENSMUST00000057627.16">
    <molecule id="Q8K004-1"/>
    <property type="protein sequence ID" value="ENSMUSP00000057095.10"/>
    <property type="gene ID" value="ENSMUSG00000047030.16"/>
</dbReference>
<dbReference type="Ensembl" id="ENSMUST00000109211.9">
    <molecule id="Q8K004-2"/>
    <property type="protein sequence ID" value="ENSMUSP00000104834.3"/>
    <property type="gene ID" value="ENSMUSG00000047030.16"/>
</dbReference>
<dbReference type="GeneID" id="263876"/>
<dbReference type="KEGG" id="mmu:263876"/>
<dbReference type="UCSC" id="uc008nzs.1">
    <molecule id="Q8K004-1"/>
    <property type="organism name" value="mouse"/>
</dbReference>
<dbReference type="AGR" id="MGI:2146885"/>
<dbReference type="CTD" id="9825"/>
<dbReference type="MGI" id="MGI:2146885">
    <property type="gene designation" value="Spata2"/>
</dbReference>
<dbReference type="VEuPathDB" id="HostDB:ENSMUSG00000047030"/>
<dbReference type="eggNOG" id="ENOG502RR2T">
    <property type="taxonomic scope" value="Eukaryota"/>
</dbReference>
<dbReference type="GeneTree" id="ENSGT00530000063956"/>
<dbReference type="HOGENOM" id="CLU_039585_0_0_1"/>
<dbReference type="InParanoid" id="Q8K004"/>
<dbReference type="OMA" id="NKQRPIN"/>
<dbReference type="OrthoDB" id="9989817at2759"/>
<dbReference type="PhylomeDB" id="Q8K004"/>
<dbReference type="TreeFam" id="TF328840"/>
<dbReference type="Reactome" id="R-MMU-5357786">
    <property type="pathway name" value="TNFR1-induced proapoptotic signaling"/>
</dbReference>
<dbReference type="Reactome" id="R-MMU-5357905">
    <property type="pathway name" value="Regulation of TNFR1 signaling"/>
</dbReference>
<dbReference type="Reactome" id="R-MMU-5357956">
    <property type="pathway name" value="TNFR1-induced NF-kappa-B signaling pathway"/>
</dbReference>
<dbReference type="BioGRID-ORCS" id="263876">
    <property type="hits" value="10 hits in 79 CRISPR screens"/>
</dbReference>
<dbReference type="ChiTaRS" id="Spata2">
    <property type="organism name" value="mouse"/>
</dbReference>
<dbReference type="PRO" id="PR:Q8K004"/>
<dbReference type="Proteomes" id="UP000000589">
    <property type="component" value="Chromosome 2"/>
</dbReference>
<dbReference type="RNAct" id="Q8K004">
    <property type="molecule type" value="protein"/>
</dbReference>
<dbReference type="Bgee" id="ENSMUSG00000047030">
    <property type="expression patterns" value="Expressed in ear vesicle and 225 other cell types or tissues"/>
</dbReference>
<dbReference type="GO" id="GO:0005737">
    <property type="term" value="C:cytoplasm"/>
    <property type="evidence" value="ECO:0000314"/>
    <property type="project" value="MGI"/>
</dbReference>
<dbReference type="GO" id="GO:0001650">
    <property type="term" value="C:fibrillar center"/>
    <property type="evidence" value="ECO:0007669"/>
    <property type="project" value="Ensembl"/>
</dbReference>
<dbReference type="GO" id="GO:0005654">
    <property type="term" value="C:nucleoplasm"/>
    <property type="evidence" value="ECO:0007669"/>
    <property type="project" value="Ensembl"/>
</dbReference>
<dbReference type="GO" id="GO:0044877">
    <property type="term" value="F:protein-containing complex binding"/>
    <property type="evidence" value="ECO:0000266"/>
    <property type="project" value="MGI"/>
</dbReference>
<dbReference type="GO" id="GO:0030159">
    <property type="term" value="F:signaling receptor complex adaptor activity"/>
    <property type="evidence" value="ECO:0000266"/>
    <property type="project" value="MGI"/>
</dbReference>
<dbReference type="GO" id="GO:1990381">
    <property type="term" value="F:ubiquitin-specific protease binding"/>
    <property type="evidence" value="ECO:0000266"/>
    <property type="project" value="MGI"/>
</dbReference>
<dbReference type="GO" id="GO:0070266">
    <property type="term" value="P:necroptotic process"/>
    <property type="evidence" value="ECO:0000315"/>
    <property type="project" value="MGI"/>
</dbReference>
<dbReference type="GO" id="GO:0070536">
    <property type="term" value="P:protein K63-linked deubiquitination"/>
    <property type="evidence" value="ECO:0000250"/>
    <property type="project" value="UniProtKB"/>
</dbReference>
<dbReference type="GO" id="GO:1990108">
    <property type="term" value="P:protein linear deubiquitination"/>
    <property type="evidence" value="ECO:0000315"/>
    <property type="project" value="UniProtKB"/>
</dbReference>
<dbReference type="GO" id="GO:0050727">
    <property type="term" value="P:regulation of inflammatory response"/>
    <property type="evidence" value="ECO:0000250"/>
    <property type="project" value="UniProtKB"/>
</dbReference>
<dbReference type="GO" id="GO:0060544">
    <property type="term" value="P:regulation of necroptotic process"/>
    <property type="evidence" value="ECO:0000315"/>
    <property type="project" value="UniProtKB"/>
</dbReference>
<dbReference type="GO" id="GO:0010803">
    <property type="term" value="P:regulation of tumor necrosis factor-mediated signaling pathway"/>
    <property type="evidence" value="ECO:0000315"/>
    <property type="project" value="UniProtKB"/>
</dbReference>
<dbReference type="GO" id="GO:0072520">
    <property type="term" value="P:seminiferous tubule development"/>
    <property type="evidence" value="ECO:0000315"/>
    <property type="project" value="MGI"/>
</dbReference>
<dbReference type="GO" id="GO:0007283">
    <property type="term" value="P:spermatogenesis"/>
    <property type="evidence" value="ECO:0000315"/>
    <property type="project" value="MGI"/>
</dbReference>
<dbReference type="CDD" id="cd19757">
    <property type="entry name" value="Bbox1"/>
    <property type="match status" value="1"/>
</dbReference>
<dbReference type="FunFam" id="1.20.58.2190:FF:000002">
    <property type="entry name" value="spermatogenesis-associated protein 2"/>
    <property type="match status" value="1"/>
</dbReference>
<dbReference type="Gene3D" id="1.20.58.2190">
    <property type="match status" value="1"/>
</dbReference>
<dbReference type="InterPro" id="IPR048839">
    <property type="entry name" value="SPATA2_PUB-like"/>
</dbReference>
<dbReference type="PANTHER" id="PTHR15326:SF8">
    <property type="entry name" value="SPERMATOGENESIS-ASSOCIATED PROTEIN 2"/>
    <property type="match status" value="1"/>
</dbReference>
<dbReference type="PANTHER" id="PTHR15326">
    <property type="entry name" value="SPERMATOGENESIS-ASSOCIATED PROTEIN 2/TAMOZHENNIC"/>
    <property type="match status" value="1"/>
</dbReference>
<dbReference type="Pfam" id="PF21388">
    <property type="entry name" value="SPATA2_PUB-like"/>
    <property type="match status" value="1"/>
</dbReference>
<feature type="chain" id="PRO_0000445574" description="Spermatogenesis-associated protein 2">
    <location>
        <begin position="1"/>
        <end position="515"/>
    </location>
</feature>
<feature type="domain" description="PUB" evidence="3">
    <location>
        <begin position="78"/>
        <end position="150"/>
    </location>
</feature>
<feature type="region of interest" description="Disordered" evidence="4">
    <location>
        <begin position="429"/>
        <end position="452"/>
    </location>
</feature>
<feature type="short sequence motif" description="PIM motif" evidence="2">
    <location>
        <begin position="321"/>
        <end position="338"/>
    </location>
</feature>
<feature type="splice variant" id="VSP_059905" description="In isoform 2.">
    <original>KPSAFPSKASVH</original>
    <variation>PLLGVSHYRRSL</variation>
    <location>
        <begin position="403"/>
        <end position="414"/>
    </location>
</feature>
<feature type="splice variant" id="VSP_059906" description="In isoform 2.">
    <location>
        <begin position="415"/>
        <end position="515"/>
    </location>
</feature>
<feature type="sequence conflict" description="In Ref. 1; BAE42698." evidence="9" ref="1">
    <original>Q</original>
    <variation>K</variation>
    <location>
        <position position="501"/>
    </location>
</feature>
<proteinExistence type="evidence at protein level"/>
<reference key="1">
    <citation type="journal article" date="2005" name="Science">
        <title>The transcriptional landscape of the mammalian genome.</title>
        <authorList>
            <person name="Carninci P."/>
            <person name="Kasukawa T."/>
            <person name="Katayama S."/>
            <person name="Gough J."/>
            <person name="Frith M.C."/>
            <person name="Maeda N."/>
            <person name="Oyama R."/>
            <person name="Ravasi T."/>
            <person name="Lenhard B."/>
            <person name="Wells C."/>
            <person name="Kodzius R."/>
            <person name="Shimokawa K."/>
            <person name="Bajic V.B."/>
            <person name="Brenner S.E."/>
            <person name="Batalov S."/>
            <person name="Forrest A.R."/>
            <person name="Zavolan M."/>
            <person name="Davis M.J."/>
            <person name="Wilming L.G."/>
            <person name="Aidinis V."/>
            <person name="Allen J.E."/>
            <person name="Ambesi-Impiombato A."/>
            <person name="Apweiler R."/>
            <person name="Aturaliya R.N."/>
            <person name="Bailey T.L."/>
            <person name="Bansal M."/>
            <person name="Baxter L."/>
            <person name="Beisel K.W."/>
            <person name="Bersano T."/>
            <person name="Bono H."/>
            <person name="Chalk A.M."/>
            <person name="Chiu K.P."/>
            <person name="Choudhary V."/>
            <person name="Christoffels A."/>
            <person name="Clutterbuck D.R."/>
            <person name="Crowe M.L."/>
            <person name="Dalla E."/>
            <person name="Dalrymple B.P."/>
            <person name="de Bono B."/>
            <person name="Della Gatta G."/>
            <person name="di Bernardo D."/>
            <person name="Down T."/>
            <person name="Engstrom P."/>
            <person name="Fagiolini M."/>
            <person name="Faulkner G."/>
            <person name="Fletcher C.F."/>
            <person name="Fukushima T."/>
            <person name="Furuno M."/>
            <person name="Futaki S."/>
            <person name="Gariboldi M."/>
            <person name="Georgii-Hemming P."/>
            <person name="Gingeras T.R."/>
            <person name="Gojobori T."/>
            <person name="Green R.E."/>
            <person name="Gustincich S."/>
            <person name="Harbers M."/>
            <person name="Hayashi Y."/>
            <person name="Hensch T.K."/>
            <person name="Hirokawa N."/>
            <person name="Hill D."/>
            <person name="Huminiecki L."/>
            <person name="Iacono M."/>
            <person name="Ikeo K."/>
            <person name="Iwama A."/>
            <person name="Ishikawa T."/>
            <person name="Jakt M."/>
            <person name="Kanapin A."/>
            <person name="Katoh M."/>
            <person name="Kawasawa Y."/>
            <person name="Kelso J."/>
            <person name="Kitamura H."/>
            <person name="Kitano H."/>
            <person name="Kollias G."/>
            <person name="Krishnan S.P."/>
            <person name="Kruger A."/>
            <person name="Kummerfeld S.K."/>
            <person name="Kurochkin I.V."/>
            <person name="Lareau L.F."/>
            <person name="Lazarevic D."/>
            <person name="Lipovich L."/>
            <person name="Liu J."/>
            <person name="Liuni S."/>
            <person name="McWilliam S."/>
            <person name="Madan Babu M."/>
            <person name="Madera M."/>
            <person name="Marchionni L."/>
            <person name="Matsuda H."/>
            <person name="Matsuzawa S."/>
            <person name="Miki H."/>
            <person name="Mignone F."/>
            <person name="Miyake S."/>
            <person name="Morris K."/>
            <person name="Mottagui-Tabar S."/>
            <person name="Mulder N."/>
            <person name="Nakano N."/>
            <person name="Nakauchi H."/>
            <person name="Ng P."/>
            <person name="Nilsson R."/>
            <person name="Nishiguchi S."/>
            <person name="Nishikawa S."/>
            <person name="Nori F."/>
            <person name="Ohara O."/>
            <person name="Okazaki Y."/>
            <person name="Orlando V."/>
            <person name="Pang K.C."/>
            <person name="Pavan W.J."/>
            <person name="Pavesi G."/>
            <person name="Pesole G."/>
            <person name="Petrovsky N."/>
            <person name="Piazza S."/>
            <person name="Reed J."/>
            <person name="Reid J.F."/>
            <person name="Ring B.Z."/>
            <person name="Ringwald M."/>
            <person name="Rost B."/>
            <person name="Ruan Y."/>
            <person name="Salzberg S.L."/>
            <person name="Sandelin A."/>
            <person name="Schneider C."/>
            <person name="Schoenbach C."/>
            <person name="Sekiguchi K."/>
            <person name="Semple C.A."/>
            <person name="Seno S."/>
            <person name="Sessa L."/>
            <person name="Sheng Y."/>
            <person name="Shibata Y."/>
            <person name="Shimada H."/>
            <person name="Shimada K."/>
            <person name="Silva D."/>
            <person name="Sinclair B."/>
            <person name="Sperling S."/>
            <person name="Stupka E."/>
            <person name="Sugiura K."/>
            <person name="Sultana R."/>
            <person name="Takenaka Y."/>
            <person name="Taki K."/>
            <person name="Tammoja K."/>
            <person name="Tan S.L."/>
            <person name="Tang S."/>
            <person name="Taylor M.S."/>
            <person name="Tegner J."/>
            <person name="Teichmann S.A."/>
            <person name="Ueda H.R."/>
            <person name="van Nimwegen E."/>
            <person name="Verardo R."/>
            <person name="Wei C.L."/>
            <person name="Yagi K."/>
            <person name="Yamanishi H."/>
            <person name="Zabarovsky E."/>
            <person name="Zhu S."/>
            <person name="Zimmer A."/>
            <person name="Hide W."/>
            <person name="Bult C."/>
            <person name="Grimmond S.M."/>
            <person name="Teasdale R.D."/>
            <person name="Liu E.T."/>
            <person name="Brusic V."/>
            <person name="Quackenbush J."/>
            <person name="Wahlestedt C."/>
            <person name="Mattick J.S."/>
            <person name="Hume D.A."/>
            <person name="Kai C."/>
            <person name="Sasaki D."/>
            <person name="Tomaru Y."/>
            <person name="Fukuda S."/>
            <person name="Kanamori-Katayama M."/>
            <person name="Suzuki M."/>
            <person name="Aoki J."/>
            <person name="Arakawa T."/>
            <person name="Iida J."/>
            <person name="Imamura K."/>
            <person name="Itoh M."/>
            <person name="Kato T."/>
            <person name="Kawaji H."/>
            <person name="Kawagashira N."/>
            <person name="Kawashima T."/>
            <person name="Kojima M."/>
            <person name="Kondo S."/>
            <person name="Konno H."/>
            <person name="Nakano K."/>
            <person name="Ninomiya N."/>
            <person name="Nishio T."/>
            <person name="Okada M."/>
            <person name="Plessy C."/>
            <person name="Shibata K."/>
            <person name="Shiraki T."/>
            <person name="Suzuki S."/>
            <person name="Tagami M."/>
            <person name="Waki K."/>
            <person name="Watahiki A."/>
            <person name="Okamura-Oho Y."/>
            <person name="Suzuki H."/>
            <person name="Kawai J."/>
            <person name="Hayashizaki Y."/>
        </authorList>
    </citation>
    <scope>NUCLEOTIDE SEQUENCE [LARGE SCALE MRNA] (ISOFORM 2)</scope>
    <source>
        <strain>NOD</strain>
        <tissue>Lung</tissue>
        <tissue>Spleen</tissue>
    </source>
</reference>
<reference key="2">
    <citation type="journal article" date="2009" name="PLoS Biol.">
        <title>Lineage-specific biology revealed by a finished genome assembly of the mouse.</title>
        <authorList>
            <person name="Church D.M."/>
            <person name="Goodstadt L."/>
            <person name="Hillier L.W."/>
            <person name="Zody M.C."/>
            <person name="Goldstein S."/>
            <person name="She X."/>
            <person name="Bult C.J."/>
            <person name="Agarwala R."/>
            <person name="Cherry J.L."/>
            <person name="DiCuccio M."/>
            <person name="Hlavina W."/>
            <person name="Kapustin Y."/>
            <person name="Meric P."/>
            <person name="Maglott D."/>
            <person name="Birtle Z."/>
            <person name="Marques A.C."/>
            <person name="Graves T."/>
            <person name="Zhou S."/>
            <person name="Teague B."/>
            <person name="Potamousis K."/>
            <person name="Churas C."/>
            <person name="Place M."/>
            <person name="Herschleb J."/>
            <person name="Runnheim R."/>
            <person name="Forrest D."/>
            <person name="Amos-Landgraf J."/>
            <person name="Schwartz D.C."/>
            <person name="Cheng Z."/>
            <person name="Lindblad-Toh K."/>
            <person name="Eichler E.E."/>
            <person name="Ponting C.P."/>
        </authorList>
    </citation>
    <scope>NUCLEOTIDE SEQUENCE [LARGE SCALE GENOMIC DNA]</scope>
    <source>
        <strain>C57BL/6J</strain>
    </source>
</reference>
<reference key="3">
    <citation type="journal article" date="2004" name="Genome Res.">
        <title>The status, quality, and expansion of the NIH full-length cDNA project: the Mammalian Gene Collection (MGC).</title>
        <authorList>
            <consortium name="The MGC Project Team"/>
        </authorList>
    </citation>
    <scope>NUCLEOTIDE SEQUENCE [LARGE SCALE MRNA]</scope>
    <source>
        <tissue evidence="10">Eye</tissue>
    </source>
</reference>
<reference key="4">
    <citation type="journal article" date="2017" name="Biol. Reprod.">
        <title>Deletion of Spata2 by CRISPR/Cas9n causes increased inhibin alpha expression and attenuated fertility in male mice.</title>
        <authorList>
            <person name="Zhao J."/>
            <person name="Zhao J."/>
            <person name="Xu G."/>
            <person name="Wang Z."/>
            <person name="Gao J."/>
            <person name="Cui S."/>
            <person name="Liu J."/>
        </authorList>
    </citation>
    <scope>SUBCELLULAR LOCATION</scope>
    <scope>DISRUPTION PHENOTYPE</scope>
    <scope>TISSUE SPECIFICITY</scope>
</reference>
<reference key="5">
    <citation type="journal article" date="2017" name="Genes Dev.">
        <title>SPATA2 regulates the activation of RIPK1 by modulating linear ubiquitination.</title>
        <authorList>
            <person name="Wei R."/>
            <person name="Xu L.W."/>
            <person name="Liu J."/>
            <person name="Li Y."/>
            <person name="Zhang P."/>
            <person name="Shan B."/>
            <person name="Lu X."/>
            <person name="Qian L."/>
            <person name="Wu Z."/>
            <person name="Dong K."/>
            <person name="Zhu H."/>
            <person name="Pan L."/>
            <person name="Yuan J."/>
            <person name="Pan H."/>
        </authorList>
    </citation>
    <scope>FUNCTION</scope>
    <scope>DISRUPTION PHENOTYPE</scope>
    <scope>TISSUE SPECIFICITY</scope>
</reference>
<protein>
    <recommendedName>
        <fullName evidence="7 8">Spermatogenesis-associated protein 2</fullName>
    </recommendedName>
</protein>
<gene>
    <name evidence="7 8 11" type="primary">Spata2</name>
</gene>
<accession>Q8K004</accession>
<accession>Q3TAH0</accession>
<accession>Q3UML2</accession>
<keyword id="KW-0025">Alternative splicing</keyword>
<keyword id="KW-0963">Cytoplasm</keyword>
<keyword id="KW-1210">Necrosis</keyword>
<keyword id="KW-0539">Nucleus</keyword>
<keyword id="KW-1185">Reference proteome</keyword>
<name>SPAT2_MOUSE</name>
<sequence length="515" mass="57812">MDTKYKDDLFRKYVQFHEGKVDTTPGNQQPGSDEYLRVAAATLLSLHKVDPLYRFRLIQFYEVVESSLRSLSSSSLSALHCAFSMLETMAINLFLFPWKKEFRSIKTYTGPFVYYVKSTLLEKDIRAILRFMGYEPELGTVYKLKELVESLQVKMVSFELFLAKVECEQMLGIHSQVKDKGYSELDVVAERKGSTEDARGCSDALRRRAESREHLTTSMARVALQKSASERAAKDYYKPRVTKPSRSVDAYDSYWESRKPPSKASLSLRKEPLAMDVGEDLKDEIIRPSPSLLAMSSSPHGSPDDLSSISSINGLGLLRSTYFSTQDDVDLYTDSEPRATYRRQDALRPDVWLVKNDTHPIYHKRSPPTKESALSKCQNCGLSCSSSLCQRCDSVLVCPSASKPSAFPSKASVHDSLAHGAPMREKYVGHQTQGLDRLAPVHSKPKPSTTATSRCGFCNRAGATNTCTQCSKVSCDACLGAYHYDPCCRKSELHKFLPNSQLNYKSAPFSQLVYR</sequence>